<reference key="1">
    <citation type="journal article" date="1999" name="Mayo Clin. Proc.">
        <title>Identification and cloning of putative human neuronal voltage-gated calcium channel gamma-2 and gamma-3 subunits: neurologic implications.</title>
        <authorList>
            <person name="Black J.L. III"/>
            <person name="Lennon V.A."/>
        </authorList>
    </citation>
    <scope>NUCLEOTIDE SEQUENCE [MRNA]</scope>
    <source>
        <tissue>Cerebellum</tissue>
    </source>
</reference>
<reference key="2">
    <citation type="journal article" date="1999" name="Genomics">
        <title>Genome duplications and other features in 12 Mb of DNA sequence from human chromosome 16p and 16q.</title>
        <authorList>
            <person name="Loftus B.J."/>
            <person name="Kim U.-J."/>
            <person name="Sneddon V.P."/>
            <person name="Kalush F."/>
            <person name="Brandon R."/>
            <person name="Fuhrmann J."/>
            <person name="Mason T."/>
            <person name="Crosby M.L."/>
            <person name="Barnstead M."/>
            <person name="Cronin L."/>
            <person name="Mays A.D."/>
            <person name="Cao Y."/>
            <person name="Xu R.X."/>
            <person name="Kang H.-L."/>
            <person name="Mitchell S."/>
            <person name="Eichler E.E."/>
            <person name="Harris P.C."/>
            <person name="Venter J.C."/>
            <person name="Adams M.D."/>
        </authorList>
    </citation>
    <scope>NUCLEOTIDE SEQUENCE [LARGE SCALE GENOMIC DNA]</scope>
</reference>
<reference key="3">
    <citation type="submission" date="1999-03" db="EMBL/GenBank/DDBJ databases">
        <title>Cloning of human calcium channel gamma-3 subunit.</title>
        <authorList>
            <person name="Xia J.-H."/>
            <person name="Zhang H.-L."/>
            <person name="Tang X.-X."/>
            <person name="Yu K.-P."/>
            <person name="Pan Q."/>
            <person name="Dai H.-P."/>
        </authorList>
    </citation>
    <scope>NUCLEOTIDE SEQUENCE [MRNA]</scope>
    <source>
        <tissue>Brain cortex</tissue>
    </source>
</reference>
<reference key="4">
    <citation type="submission" date="1998-12" db="EMBL/GenBank/DDBJ databases">
        <title>Cloning and characterization of a new human cDNA homologous to murine gamma-2 subunit of voltage-gated Ca2+ channel (Cacng2) mRNA.</title>
        <authorList>
            <person name="Yang J."/>
            <person name="Yu L."/>
            <person name="Zhou Y."/>
            <person name="Dai F.Y."/>
            <person name="Xin Y.R."/>
            <person name="Zhao S.Y."/>
        </authorList>
    </citation>
    <scope>NUCLEOTIDE SEQUENCE [MRNA]</scope>
</reference>
<reference key="5">
    <citation type="journal article" date="2004" name="Genome Res.">
        <title>The status, quality, and expansion of the NIH full-length cDNA project: the Mammalian Gene Collection (MGC).</title>
        <authorList>
            <consortium name="The MGC Project Team"/>
        </authorList>
    </citation>
    <scope>NUCLEOTIDE SEQUENCE [LARGE SCALE MRNA]</scope>
    <source>
        <tissue>Brain</tissue>
    </source>
</reference>
<proteinExistence type="evidence at protein level"/>
<keyword id="KW-0106">Calcium</keyword>
<keyword id="KW-0107">Calcium channel</keyword>
<keyword id="KW-0109">Calcium transport</keyword>
<keyword id="KW-0407">Ion channel</keyword>
<keyword id="KW-0406">Ion transport</keyword>
<keyword id="KW-0472">Membrane</keyword>
<keyword id="KW-0597">Phosphoprotein</keyword>
<keyword id="KW-1267">Proteomics identification</keyword>
<keyword id="KW-1185">Reference proteome</keyword>
<keyword id="KW-0812">Transmembrane</keyword>
<keyword id="KW-1133">Transmembrane helix</keyword>
<keyword id="KW-0813">Transport</keyword>
<keyword id="KW-0851">Voltage-gated channel</keyword>
<organism>
    <name type="scientific">Homo sapiens</name>
    <name type="common">Human</name>
    <dbReference type="NCBI Taxonomy" id="9606"/>
    <lineage>
        <taxon>Eukaryota</taxon>
        <taxon>Metazoa</taxon>
        <taxon>Chordata</taxon>
        <taxon>Craniata</taxon>
        <taxon>Vertebrata</taxon>
        <taxon>Euteleostomi</taxon>
        <taxon>Mammalia</taxon>
        <taxon>Eutheria</taxon>
        <taxon>Euarchontoglires</taxon>
        <taxon>Primates</taxon>
        <taxon>Haplorrhini</taxon>
        <taxon>Catarrhini</taxon>
        <taxon>Hominidae</taxon>
        <taxon>Homo</taxon>
    </lineage>
</organism>
<sequence>MRMCDRGIQMLITTVGAFAAFSLMTIAVGTDYWLYSRGVCRTKSTSDNETSRKNEEVMTHSGLWRTCCLEGAFRGVCKKIDHFPEDADYEQDTAEYLLRAVRASSVFPILSVTLLFFGGLCVAASEFHRSRHNVILSAGIFFVSAGLSNIIGIIVYISANAGDPGQRDSKKSYSYGWSFYFGAFSFIIAEIVGVVAVHIYIEKHQQLRAKSHSEFLKKSTFARLPPYRYRFRRRSSSRSTEPRSRDLSPISKGFHTIPSTDISMFTLSRDPSKITMGTLLNSDRDHAFLQFHNSTPKEFKESLHNNPANRRTTPV</sequence>
<evidence type="ECO:0000250" key="1">
    <source>
        <dbReference type="UniProtKB" id="Q8VHX0"/>
    </source>
</evidence>
<evidence type="ECO:0000250" key="2">
    <source>
        <dbReference type="UniProtKB" id="Q9JJV5"/>
    </source>
</evidence>
<evidence type="ECO:0000255" key="3"/>
<evidence type="ECO:0000305" key="4"/>
<comment type="function">
    <text evidence="1">Regulates the trafficking to the somatodendritic compartment and gating properties of AMPA-selective glutamate receptors (AMPARs). Promotes their targeting to the cell membrane and synapses and modulates their gating properties by slowing their rates of activation, deactivation and desensitization. Does not show subunit-specific AMPA receptor regulation and regulates all AMPAR subunits. Thought to stabilize the calcium channel in an inactivated (closed) state.</text>
</comment>
<comment type="subunit">
    <text evidence="1 2">The L-type calcium channel is composed of five subunits: alpha-1, alpha-2/delta, beta and gamma. Acts as an auxiliary subunit for AMPA-selective glutamate receptors (AMPARs). Found in a complex with GRIA1, GRIA2, GRIA3, GRIA4, CNIH2, CNIH3, CACNG2, CACNG4, CACNG5, CACNG7 and CACNG8. Interacts with AP4M1 and GRIA1; associates GRIA1 with the adaptor protein complex 4 (AP-4) to target GRIA1 to the somatodendritic compartment of neurons.</text>
</comment>
<comment type="subcellular location">
    <subcellularLocation>
        <location evidence="3">Membrane</location>
        <topology evidence="3">Multi-pass membrane protein</topology>
    </subcellularLocation>
    <text evidence="2">Displays a somatodendritic localization and is excluded from axons in neurons.</text>
</comment>
<comment type="similarity">
    <text evidence="4">Belongs to the PMP-22/EMP/MP20 family. CACNG subfamily.</text>
</comment>
<accession>O60359</accession>
<gene>
    <name type="primary">CACNG3</name>
</gene>
<feature type="chain" id="PRO_0000164675" description="Voltage-dependent calcium channel gamma-3 subunit">
    <location>
        <begin position="1"/>
        <end position="315"/>
    </location>
</feature>
<feature type="transmembrane region" description="Helical" evidence="3">
    <location>
        <begin position="8"/>
        <end position="28"/>
    </location>
</feature>
<feature type="transmembrane region" description="Helical" evidence="3">
    <location>
        <begin position="104"/>
        <end position="124"/>
    </location>
</feature>
<feature type="transmembrane region" description="Helical" evidence="3">
    <location>
        <begin position="135"/>
        <end position="155"/>
    </location>
</feature>
<feature type="transmembrane region" description="Helical" evidence="3">
    <location>
        <begin position="181"/>
        <end position="201"/>
    </location>
</feature>
<feature type="modified residue" description="Phosphoserine" evidence="1">
    <location>
        <position position="248"/>
    </location>
</feature>
<dbReference type="EMBL" id="AF100346">
    <property type="protein sequence ID" value="AAD22739.1"/>
    <property type="molecule type" value="mRNA"/>
</dbReference>
<dbReference type="EMBL" id="AC004125">
    <property type="protein sequence ID" value="AAC15246.1"/>
    <property type="molecule type" value="Genomic_DNA"/>
</dbReference>
<dbReference type="EMBL" id="AF134640">
    <property type="protein sequence ID" value="AAF42975.1"/>
    <property type="molecule type" value="mRNA"/>
</dbReference>
<dbReference type="EMBL" id="AF114832">
    <property type="protein sequence ID" value="AAP97231.1"/>
    <property type="molecule type" value="mRNA"/>
</dbReference>
<dbReference type="EMBL" id="BC037899">
    <property type="protein sequence ID" value="AAH37899.1"/>
    <property type="molecule type" value="mRNA"/>
</dbReference>
<dbReference type="EMBL" id="BC040005">
    <property type="protein sequence ID" value="AAH40005.1"/>
    <property type="molecule type" value="mRNA"/>
</dbReference>
<dbReference type="CCDS" id="CCDS10620.1"/>
<dbReference type="RefSeq" id="NP_006530.1">
    <property type="nucleotide sequence ID" value="NM_006539.4"/>
</dbReference>
<dbReference type="SMR" id="O60359"/>
<dbReference type="BioGRID" id="115647">
    <property type="interactions" value="11"/>
</dbReference>
<dbReference type="FunCoup" id="O60359">
    <property type="interactions" value="534"/>
</dbReference>
<dbReference type="IntAct" id="O60359">
    <property type="interactions" value="9"/>
</dbReference>
<dbReference type="MINT" id="O60359"/>
<dbReference type="STRING" id="9606.ENSP00000005284"/>
<dbReference type="ChEMBL" id="CHEMBL2363032"/>
<dbReference type="DrugBank" id="DB13746">
    <property type="generic name" value="Bioallethrin"/>
</dbReference>
<dbReference type="DrugBank" id="DB11148">
    <property type="generic name" value="Butamben"/>
</dbReference>
<dbReference type="DrugBank" id="DB09235">
    <property type="generic name" value="Efonidipine"/>
</dbReference>
<dbReference type="DrugBank" id="DB00228">
    <property type="generic name" value="Enflurane"/>
</dbReference>
<dbReference type="DrugBank" id="DB00153">
    <property type="generic name" value="Ergocalciferol"/>
</dbReference>
<dbReference type="DrugBank" id="DB00622">
    <property type="generic name" value="Nicardipine"/>
</dbReference>
<dbReference type="DrugBank" id="DB00661">
    <property type="generic name" value="Verapamil"/>
</dbReference>
<dbReference type="TCDB" id="8.A.16.2.2">
    <property type="family name" value="the ca(+) channel auxiliary subunit Gama1-Gama8 (ccaGama) family"/>
</dbReference>
<dbReference type="GlyGen" id="O60359">
    <property type="glycosylation" value="1 site, 1 O-linked glycan (1 site)"/>
</dbReference>
<dbReference type="iPTMnet" id="O60359"/>
<dbReference type="PhosphoSitePlus" id="O60359"/>
<dbReference type="BioMuta" id="CACNG3"/>
<dbReference type="MassIVE" id="O60359"/>
<dbReference type="PaxDb" id="9606-ENSP00000005284"/>
<dbReference type="PeptideAtlas" id="O60359"/>
<dbReference type="ProteomicsDB" id="49380"/>
<dbReference type="Antibodypedia" id="26064">
    <property type="antibodies" value="235 antibodies from 27 providers"/>
</dbReference>
<dbReference type="DNASU" id="10368"/>
<dbReference type="Ensembl" id="ENST00000005284.4">
    <property type="protein sequence ID" value="ENSP00000005284.4"/>
    <property type="gene ID" value="ENSG00000006116.4"/>
</dbReference>
<dbReference type="GeneID" id="10368"/>
<dbReference type="KEGG" id="hsa:10368"/>
<dbReference type="MANE-Select" id="ENST00000005284.4">
    <property type="protein sequence ID" value="ENSP00000005284.4"/>
    <property type="RefSeq nucleotide sequence ID" value="NM_006539.4"/>
    <property type="RefSeq protein sequence ID" value="NP_006530.1"/>
</dbReference>
<dbReference type="UCSC" id="uc002dmf.4">
    <property type="organism name" value="human"/>
</dbReference>
<dbReference type="AGR" id="HGNC:1407"/>
<dbReference type="CTD" id="10368"/>
<dbReference type="DisGeNET" id="10368"/>
<dbReference type="GeneCards" id="CACNG3"/>
<dbReference type="HGNC" id="HGNC:1407">
    <property type="gene designation" value="CACNG3"/>
</dbReference>
<dbReference type="HPA" id="ENSG00000006116">
    <property type="expression patterns" value="Group enriched (brain, retina)"/>
</dbReference>
<dbReference type="MIM" id="606403">
    <property type="type" value="gene"/>
</dbReference>
<dbReference type="neXtProt" id="NX_O60359"/>
<dbReference type="OpenTargets" id="ENSG00000006116"/>
<dbReference type="PharmGKB" id="PA26017"/>
<dbReference type="VEuPathDB" id="HostDB:ENSG00000006116"/>
<dbReference type="eggNOG" id="ENOG502QVF5">
    <property type="taxonomic scope" value="Eukaryota"/>
</dbReference>
<dbReference type="GeneTree" id="ENSGT01050000244893"/>
<dbReference type="HOGENOM" id="CLU_053704_0_1_1"/>
<dbReference type="InParanoid" id="O60359"/>
<dbReference type="OMA" id="SRRCSHK"/>
<dbReference type="OrthoDB" id="9990458at2759"/>
<dbReference type="PAN-GO" id="O60359">
    <property type="GO annotations" value="10 GO annotations based on evolutionary models"/>
</dbReference>
<dbReference type="PhylomeDB" id="O60359"/>
<dbReference type="TreeFam" id="TF327980"/>
<dbReference type="PathwayCommons" id="O60359"/>
<dbReference type="Reactome" id="R-HSA-399719">
    <property type="pathway name" value="Trafficking of AMPA receptors"/>
</dbReference>
<dbReference type="Reactome" id="R-HSA-5682910">
    <property type="pathway name" value="LGI-ADAM interactions"/>
</dbReference>
<dbReference type="SignaLink" id="O60359"/>
<dbReference type="BioGRID-ORCS" id="10368">
    <property type="hits" value="16 hits in 1140 CRISPR screens"/>
</dbReference>
<dbReference type="ChiTaRS" id="CACNG3">
    <property type="organism name" value="human"/>
</dbReference>
<dbReference type="GeneWiki" id="CACNG3"/>
<dbReference type="GenomeRNAi" id="10368"/>
<dbReference type="Pharos" id="O60359">
    <property type="development level" value="Tbio"/>
</dbReference>
<dbReference type="PRO" id="PR:O60359"/>
<dbReference type="Proteomes" id="UP000005640">
    <property type="component" value="Chromosome 16"/>
</dbReference>
<dbReference type="RNAct" id="O60359">
    <property type="molecule type" value="protein"/>
</dbReference>
<dbReference type="Bgee" id="ENSG00000006116">
    <property type="expression patterns" value="Expressed in Brodmann (1909) area 10 and 69 other cell types or tissues"/>
</dbReference>
<dbReference type="GO" id="GO:0032281">
    <property type="term" value="C:AMPA glutamate receptor complex"/>
    <property type="evidence" value="ECO:0000250"/>
    <property type="project" value="UniProtKB"/>
</dbReference>
<dbReference type="GO" id="GO:0030425">
    <property type="term" value="C:dendrite"/>
    <property type="evidence" value="ECO:0007669"/>
    <property type="project" value="Ensembl"/>
</dbReference>
<dbReference type="GO" id="GO:0030666">
    <property type="term" value="C:endocytic vesicle membrane"/>
    <property type="evidence" value="ECO:0000304"/>
    <property type="project" value="Reactome"/>
</dbReference>
<dbReference type="GO" id="GO:0060076">
    <property type="term" value="C:excitatory synapse"/>
    <property type="evidence" value="ECO:0007669"/>
    <property type="project" value="Ensembl"/>
</dbReference>
<dbReference type="GO" id="GO:0098978">
    <property type="term" value="C:glutamatergic synapse"/>
    <property type="evidence" value="ECO:0007669"/>
    <property type="project" value="Ensembl"/>
</dbReference>
<dbReference type="GO" id="GO:0005886">
    <property type="term" value="C:plasma membrane"/>
    <property type="evidence" value="ECO:0000304"/>
    <property type="project" value="Reactome"/>
</dbReference>
<dbReference type="GO" id="GO:0098839">
    <property type="term" value="C:postsynaptic density membrane"/>
    <property type="evidence" value="ECO:0000318"/>
    <property type="project" value="GO_Central"/>
</dbReference>
<dbReference type="GO" id="GO:0098685">
    <property type="term" value="C:Schaffer collateral - CA1 synapse"/>
    <property type="evidence" value="ECO:0007669"/>
    <property type="project" value="Ensembl"/>
</dbReference>
<dbReference type="GO" id="GO:0036477">
    <property type="term" value="C:somatodendritic compartment"/>
    <property type="evidence" value="ECO:0000250"/>
    <property type="project" value="UniProtKB"/>
</dbReference>
<dbReference type="GO" id="GO:0005891">
    <property type="term" value="C:voltage-gated calcium channel complex"/>
    <property type="evidence" value="ECO:0000303"/>
    <property type="project" value="UniProtKB"/>
</dbReference>
<dbReference type="GO" id="GO:0016247">
    <property type="term" value="F:channel regulator activity"/>
    <property type="evidence" value="ECO:0000318"/>
    <property type="project" value="GO_Central"/>
</dbReference>
<dbReference type="GO" id="GO:0035255">
    <property type="term" value="F:ionotropic glutamate receptor binding"/>
    <property type="evidence" value="ECO:0007669"/>
    <property type="project" value="Ensembl"/>
</dbReference>
<dbReference type="GO" id="GO:0030165">
    <property type="term" value="F:PDZ domain binding"/>
    <property type="evidence" value="ECO:0007669"/>
    <property type="project" value="Ensembl"/>
</dbReference>
<dbReference type="GO" id="GO:0005245">
    <property type="term" value="F:voltage-gated calcium channel activity"/>
    <property type="evidence" value="ECO:0000318"/>
    <property type="project" value="GO_Central"/>
</dbReference>
<dbReference type="GO" id="GO:0006816">
    <property type="term" value="P:calcium ion transport"/>
    <property type="evidence" value="ECO:0000303"/>
    <property type="project" value="UniProtKB"/>
</dbReference>
<dbReference type="GO" id="GO:0099645">
    <property type="term" value="P:neurotransmitter receptor localization to postsynaptic specialization membrane"/>
    <property type="evidence" value="ECO:0007669"/>
    <property type="project" value="Ensembl"/>
</dbReference>
<dbReference type="GO" id="GO:0051968">
    <property type="term" value="P:positive regulation of synaptic transmission, glutamatergic"/>
    <property type="evidence" value="ECO:0000318"/>
    <property type="project" value="GO_Central"/>
</dbReference>
<dbReference type="GO" id="GO:0098970">
    <property type="term" value="P:postsynaptic neurotransmitter receptor diffusion trapping"/>
    <property type="evidence" value="ECO:0000318"/>
    <property type="project" value="GO_Central"/>
</dbReference>
<dbReference type="GO" id="GO:0008104">
    <property type="term" value="P:protein localization"/>
    <property type="evidence" value="ECO:0000250"/>
    <property type="project" value="UniProtKB"/>
</dbReference>
<dbReference type="GO" id="GO:0006605">
    <property type="term" value="P:protein targeting"/>
    <property type="evidence" value="ECO:0000250"/>
    <property type="project" value="UniProtKB"/>
</dbReference>
<dbReference type="GO" id="GO:2000311">
    <property type="term" value="P:regulation of AMPA receptor activity"/>
    <property type="evidence" value="ECO:0000250"/>
    <property type="project" value="UniProtKB"/>
</dbReference>
<dbReference type="GO" id="GO:0019226">
    <property type="term" value="P:transmission of nerve impulse"/>
    <property type="evidence" value="ECO:0000318"/>
    <property type="project" value="GO_Central"/>
</dbReference>
<dbReference type="FunFam" id="1.20.140.150:FF:000002">
    <property type="entry name" value="Voltage-dependent calcium channel gamma-2 subunit"/>
    <property type="match status" value="1"/>
</dbReference>
<dbReference type="Gene3D" id="1.20.140.150">
    <property type="match status" value="1"/>
</dbReference>
<dbReference type="InterPro" id="IPR051072">
    <property type="entry name" value="CACNG_subunit"/>
</dbReference>
<dbReference type="InterPro" id="IPR004031">
    <property type="entry name" value="PMP22/EMP/MP20/Claudin"/>
</dbReference>
<dbReference type="InterPro" id="IPR008368">
    <property type="entry name" value="VDCC_gsu"/>
</dbReference>
<dbReference type="PANTHER" id="PTHR12107">
    <property type="entry name" value="VOLTAGE-DEPENDENT CALCIUM CHANNEL GAMMA SUBUNIT"/>
    <property type="match status" value="1"/>
</dbReference>
<dbReference type="PANTHER" id="PTHR12107:SF5">
    <property type="entry name" value="VOLTAGE-DEPENDENT CALCIUM CHANNEL GAMMA-3 SUBUNIT"/>
    <property type="match status" value="1"/>
</dbReference>
<dbReference type="Pfam" id="PF00822">
    <property type="entry name" value="PMP22_Claudin"/>
    <property type="match status" value="1"/>
</dbReference>
<dbReference type="PRINTS" id="PR01792">
    <property type="entry name" value="VDCCGAMMA"/>
</dbReference>
<protein>
    <recommendedName>
        <fullName>Voltage-dependent calcium channel gamma-3 subunit</fullName>
    </recommendedName>
    <alternativeName>
        <fullName>Neuronal voltage-gated calcium channel gamma-3 subunit</fullName>
    </alternativeName>
    <alternativeName>
        <fullName>Transmembrane AMPAR regulatory protein gamma-3</fullName>
        <shortName>TARP gamma-3</shortName>
    </alternativeName>
</protein>
<name>CCG3_HUMAN</name>